<accession>Q4GXH5</accession>
<protein>
    <recommendedName>
        <fullName evidence="2">Large ribosomal subunit protein uL22</fullName>
    </recommendedName>
    <alternativeName>
        <fullName>60S ribosomal protein L17</fullName>
    </alternativeName>
</protein>
<proteinExistence type="evidence at transcript level"/>
<gene>
    <name type="primary">RpL17</name>
</gene>
<organism>
    <name type="scientific">Carabus granulatus</name>
    <name type="common">Ground beetle</name>
    <dbReference type="NCBI Taxonomy" id="118799"/>
    <lineage>
        <taxon>Eukaryota</taxon>
        <taxon>Metazoa</taxon>
        <taxon>Ecdysozoa</taxon>
        <taxon>Arthropoda</taxon>
        <taxon>Hexapoda</taxon>
        <taxon>Insecta</taxon>
        <taxon>Pterygota</taxon>
        <taxon>Neoptera</taxon>
        <taxon>Endopterygota</taxon>
        <taxon>Coleoptera</taxon>
        <taxon>Adephaga</taxon>
        <taxon>Caraboidea</taxon>
        <taxon>Carabidae</taxon>
        <taxon>Carabinae</taxon>
        <taxon>Carabini</taxon>
        <taxon>Carabina</taxon>
        <taxon>Carabus</taxon>
        <taxon>Carabus</taxon>
    </lineage>
</organism>
<feature type="chain" id="PRO_0000323410" description="Large ribosomal subunit protein uL22">
    <location>
        <begin position="1"/>
        <end position="182"/>
    </location>
</feature>
<feature type="region of interest" description="Disordered" evidence="1">
    <location>
        <begin position="155"/>
        <end position="182"/>
    </location>
</feature>
<reference key="1">
    <citation type="submission" date="2005-07" db="EMBL/GenBank/DDBJ databases">
        <title>Ribosomal proteins of Coleoptera.</title>
        <authorList>
            <person name="Longhorn S.J."/>
            <person name="Vogler A.P."/>
        </authorList>
    </citation>
    <scope>NUCLEOTIDE SEQUENCE [MRNA]</scope>
</reference>
<dbReference type="EMBL" id="AM049048">
    <property type="protein sequence ID" value="CAJ17287.1"/>
    <property type="molecule type" value="mRNA"/>
</dbReference>
<dbReference type="SMR" id="Q4GXH5"/>
<dbReference type="GO" id="GO:0022625">
    <property type="term" value="C:cytosolic large ribosomal subunit"/>
    <property type="evidence" value="ECO:0007669"/>
    <property type="project" value="TreeGrafter"/>
</dbReference>
<dbReference type="GO" id="GO:0003735">
    <property type="term" value="F:structural constituent of ribosome"/>
    <property type="evidence" value="ECO:0007669"/>
    <property type="project" value="InterPro"/>
</dbReference>
<dbReference type="GO" id="GO:0002181">
    <property type="term" value="P:cytoplasmic translation"/>
    <property type="evidence" value="ECO:0007669"/>
    <property type="project" value="TreeGrafter"/>
</dbReference>
<dbReference type="CDD" id="cd00336">
    <property type="entry name" value="Ribosomal_L22"/>
    <property type="match status" value="1"/>
</dbReference>
<dbReference type="FunFam" id="3.90.470.10:FF:000003">
    <property type="entry name" value="60S ribosomal protein L17"/>
    <property type="match status" value="1"/>
</dbReference>
<dbReference type="Gene3D" id="3.90.470.10">
    <property type="entry name" value="Ribosomal protein L22/L17"/>
    <property type="match status" value="1"/>
</dbReference>
<dbReference type="InterPro" id="IPR001063">
    <property type="entry name" value="Ribosomal_uL22"/>
</dbReference>
<dbReference type="InterPro" id="IPR018260">
    <property type="entry name" value="Ribosomal_uL22_CS"/>
</dbReference>
<dbReference type="InterPro" id="IPR005721">
    <property type="entry name" value="Ribosomal_uL22_euk/arc"/>
</dbReference>
<dbReference type="InterPro" id="IPR036394">
    <property type="entry name" value="Ribosomal_uL22_sf"/>
</dbReference>
<dbReference type="NCBIfam" id="TIGR01038">
    <property type="entry name" value="uL22_arch_euk"/>
    <property type="match status" value="1"/>
</dbReference>
<dbReference type="PANTHER" id="PTHR11593">
    <property type="entry name" value="60S RIBOSOMAL PROTEIN L17"/>
    <property type="match status" value="1"/>
</dbReference>
<dbReference type="PANTHER" id="PTHR11593:SF10">
    <property type="entry name" value="60S RIBOSOMAL PROTEIN L17"/>
    <property type="match status" value="1"/>
</dbReference>
<dbReference type="Pfam" id="PF00237">
    <property type="entry name" value="Ribosomal_L22"/>
    <property type="match status" value="1"/>
</dbReference>
<dbReference type="SUPFAM" id="SSF54843">
    <property type="entry name" value="Ribosomal protein L22"/>
    <property type="match status" value="1"/>
</dbReference>
<dbReference type="PROSITE" id="PS00464">
    <property type="entry name" value="RIBOSOMAL_L22"/>
    <property type="match status" value="1"/>
</dbReference>
<name>RL17_CARGR</name>
<comment type="similarity">
    <text evidence="2">Belongs to the universal ribosomal protein uL22 family.</text>
</comment>
<keyword id="KW-0687">Ribonucleoprotein</keyword>
<keyword id="KW-0689">Ribosomal protein</keyword>
<sequence>MGRYSREPDVASKTCKARGSNLRVHFKNTRETAMAIKKMSLRRAQAFLKNVTDHKECVPFRRFNGGVGRCSQAKQWGTTQGRWPKKSAEFLLQMLRNAESNADYSGLDVDRLVIEHIQVNRAPCLRRRTYRAHGRINPYMSSPCHIEMWLTEAESGVDGAKQGKKKKKTDGVEKATTKRQKQ</sequence>
<evidence type="ECO:0000256" key="1">
    <source>
        <dbReference type="SAM" id="MobiDB-lite"/>
    </source>
</evidence>
<evidence type="ECO:0000305" key="2"/>